<feature type="chain" id="PRO_1000086080" description="Small ribosomal subunit protein uS3">
    <location>
        <begin position="1"/>
        <end position="241"/>
    </location>
</feature>
<feature type="domain" description="KH type-2" evidence="1">
    <location>
        <begin position="39"/>
        <end position="109"/>
    </location>
</feature>
<feature type="region of interest" description="Disordered" evidence="2">
    <location>
        <begin position="213"/>
        <end position="241"/>
    </location>
</feature>
<organism>
    <name type="scientific">Acaryochloris marina (strain MBIC 11017)</name>
    <dbReference type="NCBI Taxonomy" id="329726"/>
    <lineage>
        <taxon>Bacteria</taxon>
        <taxon>Bacillati</taxon>
        <taxon>Cyanobacteriota</taxon>
        <taxon>Cyanophyceae</taxon>
        <taxon>Acaryochloridales</taxon>
        <taxon>Acaryochloridaceae</taxon>
        <taxon>Acaryochloris</taxon>
    </lineage>
</organism>
<name>RS3_ACAM1</name>
<protein>
    <recommendedName>
        <fullName evidence="1">Small ribosomal subunit protein uS3</fullName>
    </recommendedName>
    <alternativeName>
        <fullName evidence="3">30S ribosomal protein S3</fullName>
    </alternativeName>
</protein>
<gene>
    <name evidence="1" type="primary">rpsC</name>
    <name evidence="1" type="synonym">rps3</name>
    <name type="ordered locus">AM1_4702</name>
</gene>
<accession>B0C1D9</accession>
<keyword id="KW-1185">Reference proteome</keyword>
<keyword id="KW-0687">Ribonucleoprotein</keyword>
<keyword id="KW-0689">Ribosomal protein</keyword>
<keyword id="KW-0694">RNA-binding</keyword>
<keyword id="KW-0699">rRNA-binding</keyword>
<comment type="function">
    <text evidence="1">Binds the lower part of the 30S subunit head. Binds mRNA in the 70S ribosome, positioning it for translation.</text>
</comment>
<comment type="subunit">
    <text evidence="1">Part of the 30S ribosomal subunit. Forms a tight complex with proteins S10 and S14.</text>
</comment>
<comment type="similarity">
    <text evidence="1">Belongs to the universal ribosomal protein uS3 family.</text>
</comment>
<proteinExistence type="inferred from homology"/>
<evidence type="ECO:0000255" key="1">
    <source>
        <dbReference type="HAMAP-Rule" id="MF_01309"/>
    </source>
</evidence>
<evidence type="ECO:0000256" key="2">
    <source>
        <dbReference type="SAM" id="MobiDB-lite"/>
    </source>
</evidence>
<evidence type="ECO:0000305" key="3"/>
<reference key="1">
    <citation type="journal article" date="2008" name="Proc. Natl. Acad. Sci. U.S.A.">
        <title>Niche adaptation and genome expansion in the chlorophyll d-producing cyanobacterium Acaryochloris marina.</title>
        <authorList>
            <person name="Swingley W.D."/>
            <person name="Chen M."/>
            <person name="Cheung P.C."/>
            <person name="Conrad A.L."/>
            <person name="Dejesa L.C."/>
            <person name="Hao J."/>
            <person name="Honchak B.M."/>
            <person name="Karbach L.E."/>
            <person name="Kurdoglu A."/>
            <person name="Lahiri S."/>
            <person name="Mastrian S.D."/>
            <person name="Miyashita H."/>
            <person name="Page L."/>
            <person name="Ramakrishna P."/>
            <person name="Satoh S."/>
            <person name="Sattley W.M."/>
            <person name="Shimada Y."/>
            <person name="Taylor H.L."/>
            <person name="Tomo T."/>
            <person name="Tsuchiya T."/>
            <person name="Wang Z.T."/>
            <person name="Raymond J."/>
            <person name="Mimuro M."/>
            <person name="Blankenship R.E."/>
            <person name="Touchman J.W."/>
        </authorList>
    </citation>
    <scope>NUCLEOTIDE SEQUENCE [LARGE SCALE GENOMIC DNA]</scope>
    <source>
        <strain>MBIC 11017</strain>
    </source>
</reference>
<dbReference type="EMBL" id="CP000828">
    <property type="protein sequence ID" value="ABW29674.1"/>
    <property type="molecule type" value="Genomic_DNA"/>
</dbReference>
<dbReference type="RefSeq" id="WP_010469315.1">
    <property type="nucleotide sequence ID" value="NC_009925.1"/>
</dbReference>
<dbReference type="SMR" id="B0C1D9"/>
<dbReference type="STRING" id="329726.AM1_4702"/>
<dbReference type="KEGG" id="amr:AM1_4702"/>
<dbReference type="eggNOG" id="COG0092">
    <property type="taxonomic scope" value="Bacteria"/>
</dbReference>
<dbReference type="HOGENOM" id="CLU_058591_0_2_3"/>
<dbReference type="OrthoDB" id="9806396at2"/>
<dbReference type="Proteomes" id="UP000000268">
    <property type="component" value="Chromosome"/>
</dbReference>
<dbReference type="GO" id="GO:0022627">
    <property type="term" value="C:cytosolic small ribosomal subunit"/>
    <property type="evidence" value="ECO:0007669"/>
    <property type="project" value="TreeGrafter"/>
</dbReference>
<dbReference type="GO" id="GO:0003729">
    <property type="term" value="F:mRNA binding"/>
    <property type="evidence" value="ECO:0007669"/>
    <property type="project" value="UniProtKB-UniRule"/>
</dbReference>
<dbReference type="GO" id="GO:0019843">
    <property type="term" value="F:rRNA binding"/>
    <property type="evidence" value="ECO:0007669"/>
    <property type="project" value="UniProtKB-UniRule"/>
</dbReference>
<dbReference type="GO" id="GO:0003735">
    <property type="term" value="F:structural constituent of ribosome"/>
    <property type="evidence" value="ECO:0007669"/>
    <property type="project" value="InterPro"/>
</dbReference>
<dbReference type="GO" id="GO:0006412">
    <property type="term" value="P:translation"/>
    <property type="evidence" value="ECO:0007669"/>
    <property type="project" value="UniProtKB-UniRule"/>
</dbReference>
<dbReference type="CDD" id="cd02412">
    <property type="entry name" value="KH-II_30S_S3"/>
    <property type="match status" value="1"/>
</dbReference>
<dbReference type="FunFam" id="3.30.300.20:FF:000001">
    <property type="entry name" value="30S ribosomal protein S3"/>
    <property type="match status" value="1"/>
</dbReference>
<dbReference type="Gene3D" id="3.30.300.20">
    <property type="match status" value="1"/>
</dbReference>
<dbReference type="Gene3D" id="3.30.1140.32">
    <property type="entry name" value="Ribosomal protein S3, C-terminal domain"/>
    <property type="match status" value="1"/>
</dbReference>
<dbReference type="HAMAP" id="MF_01309_B">
    <property type="entry name" value="Ribosomal_uS3_B"/>
    <property type="match status" value="1"/>
</dbReference>
<dbReference type="InterPro" id="IPR004087">
    <property type="entry name" value="KH_dom"/>
</dbReference>
<dbReference type="InterPro" id="IPR015946">
    <property type="entry name" value="KH_dom-like_a/b"/>
</dbReference>
<dbReference type="InterPro" id="IPR004044">
    <property type="entry name" value="KH_dom_type_2"/>
</dbReference>
<dbReference type="InterPro" id="IPR009019">
    <property type="entry name" value="KH_sf_prok-type"/>
</dbReference>
<dbReference type="InterPro" id="IPR036419">
    <property type="entry name" value="Ribosomal_S3_C_sf"/>
</dbReference>
<dbReference type="InterPro" id="IPR005704">
    <property type="entry name" value="Ribosomal_uS3_bac-typ"/>
</dbReference>
<dbReference type="InterPro" id="IPR001351">
    <property type="entry name" value="Ribosomal_uS3_C"/>
</dbReference>
<dbReference type="InterPro" id="IPR018280">
    <property type="entry name" value="Ribosomal_uS3_CS"/>
</dbReference>
<dbReference type="NCBIfam" id="TIGR01009">
    <property type="entry name" value="rpsC_bact"/>
    <property type="match status" value="1"/>
</dbReference>
<dbReference type="PANTHER" id="PTHR11760">
    <property type="entry name" value="30S/40S RIBOSOMAL PROTEIN S3"/>
    <property type="match status" value="1"/>
</dbReference>
<dbReference type="PANTHER" id="PTHR11760:SF19">
    <property type="entry name" value="SMALL RIBOSOMAL SUBUNIT PROTEIN US3C"/>
    <property type="match status" value="1"/>
</dbReference>
<dbReference type="Pfam" id="PF07650">
    <property type="entry name" value="KH_2"/>
    <property type="match status" value="1"/>
</dbReference>
<dbReference type="Pfam" id="PF00189">
    <property type="entry name" value="Ribosomal_S3_C"/>
    <property type="match status" value="1"/>
</dbReference>
<dbReference type="SMART" id="SM00322">
    <property type="entry name" value="KH"/>
    <property type="match status" value="1"/>
</dbReference>
<dbReference type="SUPFAM" id="SSF54814">
    <property type="entry name" value="Prokaryotic type KH domain (KH-domain type II)"/>
    <property type="match status" value="1"/>
</dbReference>
<dbReference type="SUPFAM" id="SSF54821">
    <property type="entry name" value="Ribosomal protein S3 C-terminal domain"/>
    <property type="match status" value="1"/>
</dbReference>
<dbReference type="PROSITE" id="PS50823">
    <property type="entry name" value="KH_TYPE_2"/>
    <property type="match status" value="1"/>
</dbReference>
<dbReference type="PROSITE" id="PS00548">
    <property type="entry name" value="RIBOSOMAL_S3"/>
    <property type="match status" value="1"/>
</dbReference>
<sequence length="241" mass="27579">MGQKIHPTGFRLGITQDHWSRWFADTDRYPELLQEDFKVRNYVNKNLSNAGIAGVRIERKADQIDLEVRTARPGVVVGRGGSGIESLRVGLQKELGDDRPIRINVVEVARVDAEATLIAEYIVQQLVRRVSFRRVVRQAIQRAQRAGVEGIKIQVGGRLNGAEIARSEWTREGRVPLHTLRANIDYSYRTASTTYGILGVKVWVFKGEVIPGADEQPTNREPQQRRRQQQRRRQQFEDRSE</sequence>